<dbReference type="EMBL" id="M14052">
    <property type="protein sequence ID" value="AAA26290.1"/>
    <property type="molecule type" value="Genomic_DNA"/>
</dbReference>
<dbReference type="SMR" id="P06233"/>
<dbReference type="Gene3D" id="1.10.1200.10">
    <property type="entry name" value="ACP-like"/>
    <property type="match status" value="1"/>
</dbReference>
<dbReference type="InterPro" id="IPR036736">
    <property type="entry name" value="ACP-like_sf"/>
</dbReference>
<dbReference type="InterPro" id="IPR009081">
    <property type="entry name" value="PP-bd_ACP"/>
</dbReference>
<dbReference type="InterPro" id="IPR006162">
    <property type="entry name" value="Ppantetheine_attach_site"/>
</dbReference>
<dbReference type="SUPFAM" id="SSF47336">
    <property type="entry name" value="ACP-like"/>
    <property type="match status" value="1"/>
</dbReference>
<dbReference type="PROSITE" id="PS50075">
    <property type="entry name" value="CARRIER"/>
    <property type="match status" value="1"/>
</dbReference>
<dbReference type="PROSITE" id="PS00012">
    <property type="entry name" value="PHOSPHOPANTETHEINE"/>
    <property type="match status" value="1"/>
</dbReference>
<accession>P06233</accession>
<gene>
    <name type="primary">nodF</name>
    <name type="synonym">hsnA</name>
</gene>
<sequence length="90" mass="9708">MVDQLESEIIGIIKNRVESEGGDGETALIVGDLTAATELTALGVDSLGLADIIWDVEQAYGYQDRDEHGRGVVGSPERRRHSGSHPRLAH</sequence>
<keyword id="KW-0536">Nodulation</keyword>
<keyword id="KW-0596">Phosphopantetheine</keyword>
<keyword id="KW-0597">Phosphoprotein</keyword>
<keyword id="KW-0614">Plasmid</keyword>
<name>NODF_RHIML</name>
<evidence type="ECO:0000255" key="1">
    <source>
        <dbReference type="PROSITE-ProRule" id="PRU00258"/>
    </source>
</evidence>
<evidence type="ECO:0000256" key="2">
    <source>
        <dbReference type="SAM" id="MobiDB-lite"/>
    </source>
</evidence>
<evidence type="ECO:0000305" key="3"/>
<feature type="chain" id="PRO_0000180263" description="Nodulation protein F">
    <location>
        <begin position="1"/>
        <end position="90"/>
    </location>
</feature>
<feature type="domain" description="Carrier" evidence="1">
    <location>
        <begin position="4"/>
        <end position="89"/>
    </location>
</feature>
<feature type="region of interest" description="Disordered" evidence="2">
    <location>
        <begin position="65"/>
        <end position="90"/>
    </location>
</feature>
<feature type="compositionally biased region" description="Basic residues" evidence="2">
    <location>
        <begin position="78"/>
        <end position="90"/>
    </location>
</feature>
<feature type="modified residue" description="O-(pantetheine 4'-phosphoryl)serine" evidence="1">
    <location>
        <position position="46"/>
    </location>
</feature>
<geneLocation type="plasmid">
    <name>sym pRme41b</name>
</geneLocation>
<organism>
    <name type="scientific">Rhizobium meliloti</name>
    <name type="common">Ensifer meliloti</name>
    <name type="synonym">Sinorhizobium meliloti</name>
    <dbReference type="NCBI Taxonomy" id="382"/>
    <lineage>
        <taxon>Bacteria</taxon>
        <taxon>Pseudomonadati</taxon>
        <taxon>Pseudomonadota</taxon>
        <taxon>Alphaproteobacteria</taxon>
        <taxon>Hyphomicrobiales</taxon>
        <taxon>Rhizobiaceae</taxon>
        <taxon>Sinorhizobium/Ensifer group</taxon>
        <taxon>Sinorhizobium</taxon>
    </lineage>
</organism>
<proteinExistence type="inferred from homology"/>
<protein>
    <recommendedName>
        <fullName>Nodulation protein F</fullName>
    </recommendedName>
    <alternativeName>
        <fullName>Host-specificity of nodulation protein A</fullName>
    </alternativeName>
</protein>
<reference key="1">
    <citation type="journal article" date="1986" name="Cell">
        <title>Organization, structure and symbiotic function of Rhizobium meliloti nodulation genes determining host specificity for alfalfa.</title>
        <authorList>
            <person name="Horvath B."/>
            <person name="Kondorosi E."/>
            <person name="John M."/>
            <person name="Schmidt J."/>
            <person name="Toeroek I."/>
            <person name="Gyoergypal Z."/>
            <person name="Barabas I."/>
            <person name="Wieneke U."/>
            <person name="Schell J."/>
            <person name="Kondorosi A."/>
        </authorList>
    </citation>
    <scope>NUCLEOTIDE SEQUENCE [GENOMIC DNA]</scope>
</reference>
<comment type="function">
    <text>Proposed to synthesize nod factor fatty acyl chain. Involved in trans-2,trans-4,trans-6,cis-11-octadecatetraenoic acid biosynthesis.</text>
</comment>
<comment type="PTM">
    <text evidence="3">4'-phosphopantetheine is transferred from CoA to a specific serine of apo-NodF.</text>
</comment>